<proteinExistence type="evidence at protein level"/>
<name>CD109_HUMAN</name>
<organism>
    <name type="scientific">Homo sapiens</name>
    <name type="common">Human</name>
    <dbReference type="NCBI Taxonomy" id="9606"/>
    <lineage>
        <taxon>Eukaryota</taxon>
        <taxon>Metazoa</taxon>
        <taxon>Chordata</taxon>
        <taxon>Craniata</taxon>
        <taxon>Vertebrata</taxon>
        <taxon>Euteleostomi</taxon>
        <taxon>Mammalia</taxon>
        <taxon>Eutheria</taxon>
        <taxon>Euarchontoglires</taxon>
        <taxon>Primates</taxon>
        <taxon>Haplorrhini</taxon>
        <taxon>Catarrhini</taxon>
        <taxon>Hominidae</taxon>
        <taxon>Homo</taxon>
    </lineage>
</organism>
<evidence type="ECO:0000250" key="1"/>
<evidence type="ECO:0000255" key="2"/>
<evidence type="ECO:0000255" key="3">
    <source>
        <dbReference type="PROSITE-ProRule" id="PRU00498"/>
    </source>
</evidence>
<evidence type="ECO:0000269" key="4">
    <source>
    </source>
</evidence>
<evidence type="ECO:0000269" key="5">
    <source>
    </source>
</evidence>
<evidence type="ECO:0000269" key="6">
    <source>
    </source>
</evidence>
<evidence type="ECO:0000269" key="7">
    <source>
    </source>
</evidence>
<evidence type="ECO:0000269" key="8">
    <source>
    </source>
</evidence>
<evidence type="ECO:0000269" key="9">
    <source>
    </source>
</evidence>
<evidence type="ECO:0000269" key="10">
    <source>
    </source>
</evidence>
<evidence type="ECO:0000269" key="11">
    <source>
    </source>
</evidence>
<evidence type="ECO:0000269" key="12">
    <source>
    </source>
</evidence>
<evidence type="ECO:0000269" key="13">
    <source>
    </source>
</evidence>
<evidence type="ECO:0000269" key="14">
    <source>
    </source>
</evidence>
<evidence type="ECO:0000269" key="15">
    <source>
    </source>
</evidence>
<evidence type="ECO:0000269" key="16">
    <source>
    </source>
</evidence>
<evidence type="ECO:0000303" key="17">
    <source>
    </source>
</evidence>
<evidence type="ECO:0000303" key="18">
    <source>
    </source>
</evidence>
<evidence type="ECO:0000303" key="19">
    <source>
    </source>
</evidence>
<evidence type="ECO:0000305" key="20"/>
<feature type="signal peptide">
    <location>
        <begin position="1"/>
        <end position="21"/>
    </location>
</feature>
<feature type="chain" id="PRO_0000255945" description="CD109 antigen">
    <location>
        <begin position="22"/>
        <end position="1420"/>
    </location>
</feature>
<feature type="propeptide" id="PRO_0000255946" description="Removed in mature form" evidence="2">
    <location>
        <begin position="1421"/>
        <end position="1445"/>
    </location>
</feature>
<feature type="region of interest" description="Bait region (approximate)" evidence="1">
    <location>
        <begin position="593"/>
        <end position="702"/>
    </location>
</feature>
<feature type="lipid moiety-binding region" description="GPI-anchor amidated alanine" evidence="2">
    <location>
        <position position="1420"/>
    </location>
</feature>
<feature type="glycosylation site" description="N-linked (GlcNAc...) asparagine" evidence="9 14">
    <location>
        <position position="68"/>
    </location>
</feature>
<feature type="glycosylation site" description="N-linked (GlcNAc...) asparagine" evidence="9 14">
    <location>
        <position position="118"/>
    </location>
</feature>
<feature type="glycosylation site" description="N-linked (GlcNAc...) asparagine" evidence="8 9">
    <location>
        <position position="247"/>
    </location>
</feature>
<feature type="glycosylation site" description="N-linked (GlcNAc...) asparagine" evidence="2">
    <location>
        <position position="279"/>
    </location>
</feature>
<feature type="glycosylation site" description="N-linked (GlcNAc...) asparagine" evidence="2">
    <location>
        <position position="365"/>
    </location>
</feature>
<feature type="glycosylation site" description="N-linked (GlcNAc...) asparagine" evidence="9 13">
    <location>
        <position position="419"/>
    </location>
</feature>
<feature type="glycosylation site" description="N-linked (GlcNAc...) asparagine" evidence="3">
    <location>
        <position position="513"/>
    </location>
</feature>
<feature type="glycosylation site" description="N-linked (GlcNAc...) asparagine" evidence="2">
    <location>
        <position position="645"/>
    </location>
</feature>
<feature type="glycosylation site" description="N-linked (GlcNAc...) asparagine" evidence="2">
    <location>
        <position position="1086"/>
    </location>
</feature>
<feature type="glycosylation site" description="N-linked (GlcNAc...) asparagine" evidence="3">
    <location>
        <position position="1355"/>
    </location>
</feature>
<feature type="cross-link" description="Isoglutamyl cysteine thioester (Cys-Gln)" evidence="1">
    <location>
        <begin position="921"/>
        <end position="924"/>
    </location>
</feature>
<feature type="splice variant" id="VSP_021312" description="In isoform 2." evidence="19">
    <location>
        <begin position="93"/>
        <end position="169"/>
    </location>
</feature>
<feature type="splice variant" id="VSP_021313" description="In isoform 3." evidence="17">
    <original>AEYAERFM</original>
    <variation>LFGTQEAL</variation>
    <location>
        <begin position="658"/>
        <end position="665"/>
    </location>
</feature>
<feature type="splice variant" id="VSP_021314" description="In isoform 3." evidence="17">
    <location>
        <begin position="666"/>
        <end position="1445"/>
    </location>
</feature>
<feature type="splice variant" id="VSP_021315" description="In isoform 4." evidence="18">
    <location>
        <begin position="1218"/>
        <end position="1234"/>
    </location>
</feature>
<feature type="sequence variant" id="VAR_028875" description="In dbSNP:rs9446983.">
    <original>G</original>
    <variation>V</variation>
    <location>
        <position position="45"/>
    </location>
</feature>
<feature type="sequence variant" id="VAR_048105" description="In dbSNP:rs7741152.">
    <original>G</original>
    <variation>D</variation>
    <location>
        <position position="377"/>
    </location>
</feature>
<feature type="sequence variant" id="VAR_048106" description="In dbSNP:rs7742662.">
    <original>L</original>
    <variation>F</variation>
    <location>
        <position position="641"/>
    </location>
</feature>
<feature type="sequence variant" id="VAR_028876" description="In allele Gov(b); dbSNP:rs10455097." evidence="5 6 7 10 12">
    <original>Y</original>
    <variation>S</variation>
    <location>
        <position position="703"/>
    </location>
</feature>
<feature type="sequence variant" id="VAR_074179" description="In dbSNP:rs2150258884." evidence="16">
    <original>D</original>
    <variation>G</variation>
    <location>
        <position position="791"/>
    </location>
</feature>
<feature type="sequence variant" id="VAR_028877" description="In dbSNP:rs2351528." evidence="6 7 10 12">
    <original>N</original>
    <variation>S</variation>
    <location>
        <position position="797"/>
    </location>
</feature>
<feature type="sequence variant" id="VAR_028878" description="In dbSNP:rs5023688." evidence="6 7 10 12">
    <original>V</original>
    <variation>I</variation>
    <location>
        <position position="845"/>
    </location>
</feature>
<feature type="sequence variant" id="VAR_036236" description="In a colorectal cancer sample; somatic mutation; dbSNP:rs1454572681." evidence="11">
    <original>Q</original>
    <variation>E</variation>
    <location>
        <position position="1007"/>
    </location>
</feature>
<feature type="sequence variant" id="VAR_048107" description="In dbSNP:rs35630075.">
    <original>V</original>
    <variation>M</variation>
    <location>
        <position position="1009"/>
    </location>
</feature>
<feature type="sequence variant" id="VAR_036237" description="In a colorectal cancer sample; somatic mutation." evidence="11">
    <original>N</original>
    <variation>K</variation>
    <location>
        <position position="1065"/>
    </location>
</feature>
<feature type="sequence variant" id="VAR_028879" description="In dbSNP:rs2917862." evidence="4 12">
    <original>T</original>
    <variation>M</variation>
    <location>
        <position position="1241"/>
    </location>
</feature>
<feature type="sequence variant" id="VAR_048108" description="In dbSNP:rs13207595.">
    <original>H</original>
    <variation>R</variation>
    <location>
        <position position="1296"/>
    </location>
</feature>
<feature type="sequence conflict" description="In Ref. 2; AAN78483." evidence="20" ref="2">
    <original>M</original>
    <variation>I</variation>
    <location>
        <position position="627"/>
    </location>
</feature>
<feature type="sequence conflict" description="In Ref. 4; BAG36395." evidence="20" ref="4">
    <original>K</original>
    <variation>E</variation>
    <location>
        <position position="789"/>
    </location>
</feature>
<feature type="sequence conflict" description="In Ref. 2; AAN78483." evidence="20" ref="2">
    <original>G</original>
    <variation>S</variation>
    <location>
        <position position="803"/>
    </location>
</feature>
<feature type="sequence conflict" description="In Ref. 5; ABQ66266." evidence="20" ref="5">
    <original>V</original>
    <variation>A</variation>
    <location>
        <position position="1046"/>
    </location>
</feature>
<feature type="sequence conflict" description="In Ref. 4; BAG53987." evidence="20" ref="4">
    <original>D</original>
    <variation>N</variation>
    <location>
        <position position="1418"/>
    </location>
</feature>
<protein>
    <recommendedName>
        <fullName>CD109 antigen</fullName>
    </recommendedName>
    <alternativeName>
        <fullName>150 kDa TGF-beta-1-binding protein</fullName>
    </alternativeName>
    <alternativeName>
        <fullName>C3 and PZP-like alpha-2-macroglobulin domain-containing protein 7</fullName>
    </alternativeName>
    <alternativeName>
        <fullName>Platelet-specific Gov antigen</fullName>
    </alternativeName>
    <alternativeName>
        <fullName>p180</fullName>
    </alternativeName>
    <alternativeName>
        <fullName>r150</fullName>
    </alternativeName>
    <cdAntigenName>CD109</cdAntigenName>
</protein>
<dbReference type="EMBL" id="AF410459">
    <property type="protein sequence ID" value="AAL84159.1"/>
    <property type="molecule type" value="mRNA"/>
</dbReference>
<dbReference type="EMBL" id="AY149920">
    <property type="protein sequence ID" value="AAN78483.1"/>
    <property type="molecule type" value="mRNA"/>
</dbReference>
<dbReference type="EMBL" id="AY788891">
    <property type="protein sequence ID" value="AAX14639.1"/>
    <property type="molecule type" value="mRNA"/>
</dbReference>
<dbReference type="EMBL" id="AK095888">
    <property type="protein sequence ID" value="BAC04642.1"/>
    <property type="molecule type" value="mRNA"/>
</dbReference>
<dbReference type="EMBL" id="AK123960">
    <property type="protein sequence ID" value="BAG53987.1"/>
    <property type="status" value="ALT_INIT"/>
    <property type="molecule type" value="mRNA"/>
</dbReference>
<dbReference type="EMBL" id="AK313636">
    <property type="protein sequence ID" value="BAG36395.1"/>
    <property type="molecule type" value="mRNA"/>
</dbReference>
<dbReference type="EMBL" id="AL834478">
    <property type="protein sequence ID" value="CAD39137.1"/>
    <property type="molecule type" value="mRNA"/>
</dbReference>
<dbReference type="EMBL" id="BX641095">
    <property type="protein sequence ID" value="CAE46045.1"/>
    <property type="status" value="ALT_SEQ"/>
    <property type="molecule type" value="mRNA"/>
</dbReference>
<dbReference type="EMBL" id="EF553520">
    <property type="protein sequence ID" value="ABQ66266.1"/>
    <property type="molecule type" value="mRNA"/>
</dbReference>
<dbReference type="EMBL" id="AL590428">
    <property type="status" value="NOT_ANNOTATED_CDS"/>
    <property type="molecule type" value="Genomic_DNA"/>
</dbReference>
<dbReference type="EMBL" id="AL591480">
    <property type="status" value="NOT_ANNOTATED_CDS"/>
    <property type="molecule type" value="Genomic_DNA"/>
</dbReference>
<dbReference type="EMBL" id="AY736555">
    <property type="protein sequence ID" value="AAU94642.1"/>
    <property type="molecule type" value="Genomic_DNA"/>
</dbReference>
<dbReference type="EMBL" id="AY736557">
    <property type="protein sequence ID" value="AAU94644.1"/>
    <property type="molecule type" value="Genomic_DNA"/>
</dbReference>
<dbReference type="EMBL" id="AF410460">
    <property type="protein sequence ID" value="AAL84160.1"/>
    <property type="molecule type" value="Genomic_DNA"/>
</dbReference>
<dbReference type="CCDS" id="CCDS4982.1">
    <molecule id="Q6YHK3-1"/>
</dbReference>
<dbReference type="CCDS" id="CCDS55038.1">
    <molecule id="Q6YHK3-4"/>
</dbReference>
<dbReference type="CCDS" id="CCDS55039.1">
    <molecule id="Q6YHK3-2"/>
</dbReference>
<dbReference type="RefSeq" id="NP_001153059.1">
    <molecule id="Q6YHK3-4"/>
    <property type="nucleotide sequence ID" value="NM_001159587.3"/>
</dbReference>
<dbReference type="RefSeq" id="NP_001153060.1">
    <molecule id="Q6YHK3-2"/>
    <property type="nucleotide sequence ID" value="NM_001159588.3"/>
</dbReference>
<dbReference type="RefSeq" id="NP_598000.2">
    <molecule id="Q6YHK3-1"/>
    <property type="nucleotide sequence ID" value="NM_133493.5"/>
</dbReference>
<dbReference type="RefSeq" id="XP_005248716.1">
    <property type="nucleotide sequence ID" value="XM_005248659.3"/>
</dbReference>
<dbReference type="PDB" id="8S3O">
    <property type="method" value="EM"/>
    <property type="resolution" value="2.99 A"/>
    <property type="chains" value="A=22-1420"/>
</dbReference>
<dbReference type="PDBsum" id="8S3O"/>
<dbReference type="EMDB" id="EMD-19699"/>
<dbReference type="SMR" id="Q6YHK3"/>
<dbReference type="BioGRID" id="126424">
    <property type="interactions" value="103"/>
</dbReference>
<dbReference type="FunCoup" id="Q6YHK3">
    <property type="interactions" value="1035"/>
</dbReference>
<dbReference type="IntAct" id="Q6YHK3">
    <property type="interactions" value="67"/>
</dbReference>
<dbReference type="MINT" id="Q6YHK3"/>
<dbReference type="STRING" id="9606.ENSP00000287097"/>
<dbReference type="MEROPS" id="I39.006"/>
<dbReference type="CarbonylDB" id="Q6YHK3"/>
<dbReference type="GlyConnect" id="795">
    <property type="glycosylation" value="30 N-Linked glycans (12 sites)"/>
</dbReference>
<dbReference type="GlyCosmos" id="Q6YHK3">
    <property type="glycosylation" value="14 sites, 32 glycans"/>
</dbReference>
<dbReference type="GlyGen" id="Q6YHK3">
    <property type="glycosylation" value="19 sites, 106 N-linked glycans (16 sites), 1 O-linked glycan (2 sites)"/>
</dbReference>
<dbReference type="iPTMnet" id="Q6YHK3"/>
<dbReference type="PhosphoSitePlus" id="Q6YHK3"/>
<dbReference type="SwissPalm" id="Q6YHK3"/>
<dbReference type="BioMuta" id="CD109"/>
<dbReference type="DMDM" id="117949389"/>
<dbReference type="jPOST" id="Q6YHK3"/>
<dbReference type="MassIVE" id="Q6YHK3"/>
<dbReference type="PaxDb" id="9606-ENSP00000287097"/>
<dbReference type="PeptideAtlas" id="Q6YHK3"/>
<dbReference type="ProteomicsDB" id="67842">
    <molecule id="Q6YHK3-1"/>
</dbReference>
<dbReference type="ProteomicsDB" id="67843">
    <molecule id="Q6YHK3-2"/>
</dbReference>
<dbReference type="ProteomicsDB" id="67844">
    <molecule id="Q6YHK3-3"/>
</dbReference>
<dbReference type="ProteomicsDB" id="67845">
    <molecule id="Q6YHK3-4"/>
</dbReference>
<dbReference type="Pumba" id="Q6YHK3"/>
<dbReference type="Antibodypedia" id="2141">
    <property type="antibodies" value="404 antibodies from 33 providers"/>
</dbReference>
<dbReference type="DNASU" id="135228"/>
<dbReference type="Ensembl" id="ENST00000287097.6">
    <molecule id="Q6YHK3-1"/>
    <property type="protein sequence ID" value="ENSP00000287097.4"/>
    <property type="gene ID" value="ENSG00000156535.15"/>
</dbReference>
<dbReference type="Ensembl" id="ENST00000422508.6">
    <molecule id="Q6YHK3-2"/>
    <property type="protein sequence ID" value="ENSP00000404475.2"/>
    <property type="gene ID" value="ENSG00000156535.15"/>
</dbReference>
<dbReference type="Ensembl" id="ENST00000437994.6">
    <molecule id="Q6YHK3-4"/>
    <property type="protein sequence ID" value="ENSP00000388062.2"/>
    <property type="gene ID" value="ENSG00000156535.15"/>
</dbReference>
<dbReference type="GeneID" id="135228"/>
<dbReference type="KEGG" id="hsa:135228"/>
<dbReference type="MANE-Select" id="ENST00000287097.6">
    <property type="protein sequence ID" value="ENSP00000287097.4"/>
    <property type="RefSeq nucleotide sequence ID" value="NM_133493.5"/>
    <property type="RefSeq protein sequence ID" value="NP_598000.2"/>
</dbReference>
<dbReference type="UCSC" id="uc003php.4">
    <molecule id="Q6YHK3-1"/>
    <property type="organism name" value="human"/>
</dbReference>
<dbReference type="AGR" id="HGNC:21685"/>
<dbReference type="CTD" id="135228"/>
<dbReference type="DisGeNET" id="135228"/>
<dbReference type="GeneCards" id="CD109"/>
<dbReference type="HGNC" id="HGNC:21685">
    <property type="gene designation" value="CD109"/>
</dbReference>
<dbReference type="HPA" id="ENSG00000156535">
    <property type="expression patterns" value="Tissue enriched (parathyroid)"/>
</dbReference>
<dbReference type="MalaCards" id="CD109"/>
<dbReference type="MIM" id="608859">
    <property type="type" value="gene"/>
</dbReference>
<dbReference type="neXtProt" id="NX_Q6YHK3"/>
<dbReference type="OpenTargets" id="ENSG00000156535"/>
<dbReference type="Orphanet" id="853">
    <property type="disease" value="Fetal and neonatal alloimmune thrombocytopenia"/>
</dbReference>
<dbReference type="PharmGKB" id="PA134949237"/>
<dbReference type="VEuPathDB" id="HostDB:ENSG00000156535"/>
<dbReference type="eggNOG" id="KOG1366">
    <property type="taxonomic scope" value="Eukaryota"/>
</dbReference>
<dbReference type="GeneTree" id="ENSGT00940000155926"/>
<dbReference type="HOGENOM" id="CLU_001634_5_2_1"/>
<dbReference type="InParanoid" id="Q6YHK3"/>
<dbReference type="OMA" id="TLHQNRY"/>
<dbReference type="OrthoDB" id="9998011at2759"/>
<dbReference type="PAN-GO" id="Q6YHK3">
    <property type="GO annotations" value="0 GO annotations based on evolutionary models"/>
</dbReference>
<dbReference type="PhylomeDB" id="Q6YHK3"/>
<dbReference type="TreeFam" id="TF313285"/>
<dbReference type="PathwayCommons" id="Q6YHK3"/>
<dbReference type="Reactome" id="R-HSA-114608">
    <property type="pathway name" value="Platelet degranulation"/>
</dbReference>
<dbReference type="Reactome" id="R-HSA-163125">
    <property type="pathway name" value="Post-translational modification: synthesis of GPI-anchored proteins"/>
</dbReference>
<dbReference type="SignaLink" id="Q6YHK3"/>
<dbReference type="BioGRID-ORCS" id="135228">
    <property type="hits" value="12 hits in 1154 CRISPR screens"/>
</dbReference>
<dbReference type="ChiTaRS" id="CD109">
    <property type="organism name" value="human"/>
</dbReference>
<dbReference type="GeneWiki" id="CD109"/>
<dbReference type="GenomeRNAi" id="135228"/>
<dbReference type="Pharos" id="Q6YHK3">
    <property type="development level" value="Tbio"/>
</dbReference>
<dbReference type="PRO" id="PR:Q6YHK3"/>
<dbReference type="Proteomes" id="UP000005640">
    <property type="component" value="Chromosome 6"/>
</dbReference>
<dbReference type="RNAct" id="Q6YHK3">
    <property type="molecule type" value="protein"/>
</dbReference>
<dbReference type="Bgee" id="ENSG00000156535">
    <property type="expression patterns" value="Expressed in tibia and 186 other cell types or tissues"/>
</dbReference>
<dbReference type="GO" id="GO:0009986">
    <property type="term" value="C:cell surface"/>
    <property type="evidence" value="ECO:0007005"/>
    <property type="project" value="UniProtKB"/>
</dbReference>
<dbReference type="GO" id="GO:0005829">
    <property type="term" value="C:cytosol"/>
    <property type="evidence" value="ECO:0000314"/>
    <property type="project" value="HPA"/>
</dbReference>
<dbReference type="GO" id="GO:0005576">
    <property type="term" value="C:extracellular region"/>
    <property type="evidence" value="ECO:0000304"/>
    <property type="project" value="Reactome"/>
</dbReference>
<dbReference type="GO" id="GO:0005615">
    <property type="term" value="C:extracellular space"/>
    <property type="evidence" value="ECO:0007669"/>
    <property type="project" value="InterPro"/>
</dbReference>
<dbReference type="GO" id="GO:0005886">
    <property type="term" value="C:plasma membrane"/>
    <property type="evidence" value="ECO:0000314"/>
    <property type="project" value="HPA"/>
</dbReference>
<dbReference type="GO" id="GO:0031092">
    <property type="term" value="C:platelet alpha granule membrane"/>
    <property type="evidence" value="ECO:0000304"/>
    <property type="project" value="Reactome"/>
</dbReference>
<dbReference type="GO" id="GO:0098552">
    <property type="term" value="C:side of membrane"/>
    <property type="evidence" value="ECO:0007669"/>
    <property type="project" value="UniProtKB-KW"/>
</dbReference>
<dbReference type="GO" id="GO:0004867">
    <property type="term" value="F:serine-type endopeptidase inhibitor activity"/>
    <property type="evidence" value="ECO:0007669"/>
    <property type="project" value="UniProtKB-KW"/>
</dbReference>
<dbReference type="GO" id="GO:0001942">
    <property type="term" value="P:hair follicle development"/>
    <property type="evidence" value="ECO:0007669"/>
    <property type="project" value="Ensembl"/>
</dbReference>
<dbReference type="GO" id="GO:0043616">
    <property type="term" value="P:keratinocyte proliferation"/>
    <property type="evidence" value="ECO:0007669"/>
    <property type="project" value="Ensembl"/>
</dbReference>
<dbReference type="GO" id="GO:0010839">
    <property type="term" value="P:negative regulation of keratinocyte proliferation"/>
    <property type="evidence" value="ECO:0007669"/>
    <property type="project" value="Ensembl"/>
</dbReference>
<dbReference type="GO" id="GO:2000647">
    <property type="term" value="P:negative regulation of stem cell proliferation"/>
    <property type="evidence" value="ECO:0007669"/>
    <property type="project" value="Ensembl"/>
</dbReference>
<dbReference type="GO" id="GO:0030512">
    <property type="term" value="P:negative regulation of transforming growth factor beta receptor signaling pathway"/>
    <property type="evidence" value="ECO:0000314"/>
    <property type="project" value="UniProtKB"/>
</dbReference>
<dbReference type="GO" id="GO:0061045">
    <property type="term" value="P:negative regulation of wound healing"/>
    <property type="evidence" value="ECO:0000314"/>
    <property type="project" value="UniProtKB"/>
</dbReference>
<dbReference type="GO" id="GO:0072675">
    <property type="term" value="P:osteoclast fusion"/>
    <property type="evidence" value="ECO:0007669"/>
    <property type="project" value="Ensembl"/>
</dbReference>
<dbReference type="GO" id="GO:0045616">
    <property type="term" value="P:regulation of keratinocyte differentiation"/>
    <property type="evidence" value="ECO:0007669"/>
    <property type="project" value="Ensembl"/>
</dbReference>
<dbReference type="GO" id="GO:0072089">
    <property type="term" value="P:stem cell proliferation"/>
    <property type="evidence" value="ECO:0007669"/>
    <property type="project" value="Ensembl"/>
</dbReference>
<dbReference type="CDD" id="cd02897">
    <property type="entry name" value="A2M_2"/>
    <property type="match status" value="1"/>
</dbReference>
<dbReference type="FunFam" id="1.50.10.20:FF:000001">
    <property type="entry name" value="CD109 isoform 1"/>
    <property type="match status" value="1"/>
</dbReference>
<dbReference type="FunFam" id="2.60.40.1940:FF:000003">
    <property type="entry name" value="CD109 isoform 1"/>
    <property type="match status" value="1"/>
</dbReference>
<dbReference type="FunFam" id="2.60.40.1930:FF:000001">
    <property type="entry name" value="CD109 isoform 3"/>
    <property type="match status" value="1"/>
</dbReference>
<dbReference type="FunFam" id="2.60.40.2950:FF:000002">
    <property type="entry name" value="CD109 isoform 3"/>
    <property type="match status" value="1"/>
</dbReference>
<dbReference type="FunFam" id="2.60.40.1930:FF:000003">
    <property type="entry name" value="CD109 molecule"/>
    <property type="match status" value="1"/>
</dbReference>
<dbReference type="FunFam" id="2.60.40.690:FF:000005">
    <property type="entry name" value="CD109 molecule"/>
    <property type="match status" value="1"/>
</dbReference>
<dbReference type="FunFam" id="2.60.40.10:FF:000155">
    <property type="entry name" value="complement C3 isoform X1"/>
    <property type="match status" value="1"/>
</dbReference>
<dbReference type="Gene3D" id="1.50.10.20">
    <property type="match status" value="1"/>
</dbReference>
<dbReference type="Gene3D" id="2.20.130.20">
    <property type="match status" value="1"/>
</dbReference>
<dbReference type="Gene3D" id="2.60.120.1540">
    <property type="match status" value="1"/>
</dbReference>
<dbReference type="Gene3D" id="2.60.40.1930">
    <property type="match status" value="2"/>
</dbReference>
<dbReference type="Gene3D" id="2.60.40.1940">
    <property type="match status" value="1"/>
</dbReference>
<dbReference type="Gene3D" id="2.60.40.2950">
    <property type="match status" value="1"/>
</dbReference>
<dbReference type="Gene3D" id="6.20.50.160">
    <property type="match status" value="1"/>
</dbReference>
<dbReference type="Gene3D" id="2.60.40.690">
    <property type="entry name" value="Alpha-macroglobulin, receptor-binding domain"/>
    <property type="match status" value="1"/>
</dbReference>
<dbReference type="Gene3D" id="2.60.40.10">
    <property type="entry name" value="Immunoglobulins"/>
    <property type="match status" value="2"/>
</dbReference>
<dbReference type="InterPro" id="IPR009048">
    <property type="entry name" value="A-macroglobulin_rcpt-bd"/>
</dbReference>
<dbReference type="InterPro" id="IPR036595">
    <property type="entry name" value="A-macroglobulin_rcpt-bd_sf"/>
</dbReference>
<dbReference type="InterPro" id="IPR050473">
    <property type="entry name" value="A2M/Complement_sys"/>
</dbReference>
<dbReference type="InterPro" id="IPR011625">
    <property type="entry name" value="A2M_N_BRD"/>
</dbReference>
<dbReference type="InterPro" id="IPR041813">
    <property type="entry name" value="A2M_TED"/>
</dbReference>
<dbReference type="InterPro" id="IPR047565">
    <property type="entry name" value="Alpha-macroglob_thiol-ester_cl"/>
</dbReference>
<dbReference type="InterPro" id="IPR011626">
    <property type="entry name" value="Alpha-macroglobulin_TED"/>
</dbReference>
<dbReference type="InterPro" id="IPR013783">
    <property type="entry name" value="Ig-like_fold"/>
</dbReference>
<dbReference type="InterPro" id="IPR014756">
    <property type="entry name" value="Ig_E-set"/>
</dbReference>
<dbReference type="InterPro" id="IPR001599">
    <property type="entry name" value="Macroglobln_a2"/>
</dbReference>
<dbReference type="InterPro" id="IPR019742">
    <property type="entry name" value="MacrogloblnA2_CS"/>
</dbReference>
<dbReference type="InterPro" id="IPR002890">
    <property type="entry name" value="MG2"/>
</dbReference>
<dbReference type="InterPro" id="IPR041555">
    <property type="entry name" value="MG3"/>
</dbReference>
<dbReference type="InterPro" id="IPR008930">
    <property type="entry name" value="Terpenoid_cyclase/PrenylTrfase"/>
</dbReference>
<dbReference type="PANTHER" id="PTHR11412:SF136">
    <property type="entry name" value="CD109 ANTIGEN"/>
    <property type="match status" value="1"/>
</dbReference>
<dbReference type="PANTHER" id="PTHR11412">
    <property type="entry name" value="MACROGLOBULIN / COMPLEMENT"/>
    <property type="match status" value="1"/>
</dbReference>
<dbReference type="Pfam" id="PF00207">
    <property type="entry name" value="A2M"/>
    <property type="match status" value="1"/>
</dbReference>
<dbReference type="Pfam" id="PF07703">
    <property type="entry name" value="A2M_BRD"/>
    <property type="match status" value="1"/>
</dbReference>
<dbReference type="Pfam" id="PF07677">
    <property type="entry name" value="A2M_recep"/>
    <property type="match status" value="1"/>
</dbReference>
<dbReference type="Pfam" id="PF01835">
    <property type="entry name" value="MG2"/>
    <property type="match status" value="1"/>
</dbReference>
<dbReference type="Pfam" id="PF17791">
    <property type="entry name" value="MG3"/>
    <property type="match status" value="1"/>
</dbReference>
<dbReference type="Pfam" id="PF07678">
    <property type="entry name" value="TED_complement"/>
    <property type="match status" value="1"/>
</dbReference>
<dbReference type="SMART" id="SM01360">
    <property type="entry name" value="A2M"/>
    <property type="match status" value="1"/>
</dbReference>
<dbReference type="SMART" id="SM01359">
    <property type="entry name" value="A2M_N_2"/>
    <property type="match status" value="1"/>
</dbReference>
<dbReference type="SMART" id="SM01361">
    <property type="entry name" value="A2M_recep"/>
    <property type="match status" value="1"/>
</dbReference>
<dbReference type="SMART" id="SM01419">
    <property type="entry name" value="Thiol-ester_cl"/>
    <property type="match status" value="1"/>
</dbReference>
<dbReference type="SUPFAM" id="SSF49410">
    <property type="entry name" value="Alpha-macroglobulin receptor domain"/>
    <property type="match status" value="1"/>
</dbReference>
<dbReference type="SUPFAM" id="SSF81296">
    <property type="entry name" value="E set domains"/>
    <property type="match status" value="1"/>
</dbReference>
<dbReference type="SUPFAM" id="SSF48239">
    <property type="entry name" value="Terpenoid cyclases/Protein prenyltransferases"/>
    <property type="match status" value="1"/>
</dbReference>
<dbReference type="PROSITE" id="PS00477">
    <property type="entry name" value="ALPHA_2_MACROGLOBULIN"/>
    <property type="match status" value="1"/>
</dbReference>
<gene>
    <name type="primary">CD109</name>
    <name type="synonym">CPAMD7</name>
</gene>
<accession>Q6YHK3</accession>
<accession>A5YKK4</accession>
<accession>B2R948</accession>
<accession>B3KW25</accession>
<accession>Q0P6K7</accession>
<accession>Q5SYA8</accession>
<accession>Q5XUM7</accession>
<accession>Q5XUM9</accession>
<accession>Q6MZI7</accession>
<accession>Q8N3A7</accession>
<accession>Q8N915</accession>
<accession>Q8TDJ2</accession>
<accession>Q8TDJ3</accession>
<comment type="function">
    <text evidence="10">Modulates negatively TGFB1 signaling in keratinocytes.</text>
</comment>
<comment type="subunit">
    <text evidence="10">Heterodimer; disulfide-linked. Interacts with TGFB1 and TGFBR1. Forms a heteromeric complex with TGFBR1, TGFBR2 and TGFBR3 in a ligand-independent manner.</text>
</comment>
<comment type="subcellular location">
    <subcellularLocation>
        <location evidence="4 10">Cell membrane</location>
        <topology evidence="4 10">Lipid-anchor</topology>
        <topology evidence="4 10">GPI-anchor</topology>
    </subcellularLocation>
</comment>
<comment type="alternative products">
    <event type="alternative splicing"/>
    <isoform>
        <id>Q6YHK3-1</id>
        <name>1</name>
        <name>CD109 180-kDa</name>
        <sequence type="displayed"/>
    </isoform>
    <isoform>
        <id>Q6YHK3-2</id>
        <name>2</name>
        <sequence type="described" ref="VSP_021312"/>
    </isoform>
    <isoform>
        <id>Q6YHK3-3</id>
        <name>3</name>
        <sequence type="described" ref="VSP_021313 VSP_021314"/>
    </isoform>
    <isoform>
        <id>Q6YHK3-4</id>
        <name>4</name>
        <name>CD109S</name>
        <sequence type="described" ref="VSP_021315"/>
    </isoform>
</comment>
<comment type="tissue specificity">
    <text evidence="4 7 10">Widely expressed with high level in uterus, aorta, heart, lung, trachea, placenta and in fetal heart, kidney, liver, spleen and lung. Expressed by CD34(+) acute myeloid leukemia cell lines, T-cell lines, activated T-lymphoblasts, endothelial cells and activated platelets. Isoform 4 is expressed in placenta. Isoform 1 is expressed in keratinocytes and placenta.</text>
</comment>
<comment type="PTM">
    <text evidence="8 9 13 14 15">N-glycosylated.</text>
</comment>
<comment type="PTM">
    <text>2 forms of 150 (p150) and 120 kDa (p120) exist due to proteolytic degradation from a 180 kDa form.</text>
</comment>
<comment type="polymorphism">
    <text evidence="5">The Gov(b) variant in position 703 defines the Gov alloantigenic determinants.</text>
</comment>
<comment type="similarity">
    <text evidence="20">Belongs to the protease inhibitor I39 (alpha-2-macroglobulin) family.</text>
</comment>
<comment type="sequence caution" evidence="20">
    <conflict type="erroneous initiation">
        <sequence resource="EMBL-CDS" id="BAG53987"/>
    </conflict>
    <text>Truncated N-terminus.</text>
</comment>
<comment type="sequence caution" evidence="20">
    <conflict type="erroneous initiation">
        <sequence resource="EMBL-CDS" id="CAE46045"/>
    </conflict>
    <text>Extended N-terminus.</text>
</comment>
<comment type="sequence caution" evidence="20">
    <conflict type="frameshift">
        <sequence resource="EMBL-CDS" id="CAE46045"/>
    </conflict>
</comment>
<comment type="online information" name="Atlas of Genetics and Cytogenetics in Oncology and Haematology">
    <link uri="https://atlasgeneticsoncology.org/gene/42925/cd109-(cd109-molecule)"/>
</comment>
<reference key="1">
    <citation type="journal article" date="2002" name="Blood">
        <title>Cell surface antigen CD109 is a novel member of the alpha(2) macroglobulin/C3, C4, C5 family of thioester-containing proteins.</title>
        <authorList>
            <person name="Lin M."/>
            <person name="Sutherland D.R."/>
            <person name="Horsfall W."/>
            <person name="Totty N."/>
            <person name="Yeo E."/>
            <person name="Nayar R."/>
            <person name="Wu X.-F."/>
            <person name="Schuh A.C."/>
        </authorList>
    </citation>
    <scope>NUCLEOTIDE SEQUENCE [MRNA] (ISOFORM 1)</scope>
    <scope>PROTEIN SEQUENCE OF 86-98; 127-137; 170-183; 185-196; 355-374; 413-425; 444-451; 465-471; 478-491; 494-510; 573-589; 649-655; 666-672; 677-683; 698-709 AND 791-806</scope>
    <scope>TISSUE SPECIFICITY</scope>
    <scope>SUBCELLULAR LOCATION</scope>
    <scope>VARIANT MET-1241</scope>
</reference>
<reference key="2">
    <citation type="journal article" date="2004" name="Gene">
        <title>CD109 represents a novel branch of the alpha2-macroglobulin/complement gene family.</title>
        <authorList>
            <person name="Solomon K.R."/>
            <person name="Sharma P."/>
            <person name="Chan M."/>
            <person name="Morrison P.T."/>
            <person name="Finberg R.W."/>
        </authorList>
    </citation>
    <scope>NUCLEOTIDE SEQUENCE [MRNA] (ISOFORM 1)</scope>
    <scope>PROTEIN SEQUENCE OF 22-50 (ISOFORM 1)</scope>
    <scope>TISSUE SPECIFICITY</scope>
    <scope>VARIANTS SER-703; SER-797 AND ILE-845</scope>
</reference>
<reference key="3">
    <citation type="journal article" date="2006" name="FASEB J.">
        <title>Identification of CD109 as part of the TGF-beta receptor system in human keratinocytes.</title>
        <authorList>
            <person name="Finnson K.W."/>
            <person name="Tam B.Y.Y."/>
            <person name="Liu K."/>
            <person name="Marcoux A."/>
            <person name="Lepage P."/>
            <person name="Roy S."/>
            <person name="Bizet A.A."/>
            <person name="Philip A."/>
        </authorList>
    </citation>
    <scope>NUCLEOTIDE SEQUENCE [MRNA] (ISOFORM 4)</scope>
    <scope>PROTEIN SEQUENCE OF 173-191</scope>
    <scope>FUNCTION</scope>
    <scope>INTERACTION WITH TGFB1 AND TGFBR1</scope>
    <scope>SUBCELLULAR LOCATION</scope>
    <scope>TISSUE SPECIFICITY</scope>
    <scope>PROTEOLYTIC CLEAVAGE</scope>
    <scope>VARIANTS SER-703; SER-797 AND ILE-845</scope>
    <source>
        <tissue>Placenta</tissue>
    </source>
</reference>
<reference key="4">
    <citation type="journal article" date="2004" name="Nat. Genet.">
        <title>Complete sequencing and characterization of 21,243 full-length human cDNAs.</title>
        <authorList>
            <person name="Ota T."/>
            <person name="Suzuki Y."/>
            <person name="Nishikawa T."/>
            <person name="Otsuki T."/>
            <person name="Sugiyama T."/>
            <person name="Irie R."/>
            <person name="Wakamatsu A."/>
            <person name="Hayashi K."/>
            <person name="Sato H."/>
            <person name="Nagai K."/>
            <person name="Kimura K."/>
            <person name="Makita H."/>
            <person name="Sekine M."/>
            <person name="Obayashi M."/>
            <person name="Nishi T."/>
            <person name="Shibahara T."/>
            <person name="Tanaka T."/>
            <person name="Ishii S."/>
            <person name="Yamamoto J."/>
            <person name="Saito K."/>
            <person name="Kawai Y."/>
            <person name="Isono Y."/>
            <person name="Nakamura Y."/>
            <person name="Nagahari K."/>
            <person name="Murakami K."/>
            <person name="Yasuda T."/>
            <person name="Iwayanagi T."/>
            <person name="Wagatsuma M."/>
            <person name="Shiratori A."/>
            <person name="Sudo H."/>
            <person name="Hosoiri T."/>
            <person name="Kaku Y."/>
            <person name="Kodaira H."/>
            <person name="Kondo H."/>
            <person name="Sugawara M."/>
            <person name="Takahashi M."/>
            <person name="Kanda K."/>
            <person name="Yokoi T."/>
            <person name="Furuya T."/>
            <person name="Kikkawa E."/>
            <person name="Omura Y."/>
            <person name="Abe K."/>
            <person name="Kamihara K."/>
            <person name="Katsuta N."/>
            <person name="Sato K."/>
            <person name="Tanikawa M."/>
            <person name="Yamazaki M."/>
            <person name="Ninomiya K."/>
            <person name="Ishibashi T."/>
            <person name="Yamashita H."/>
            <person name="Murakawa K."/>
            <person name="Fujimori K."/>
            <person name="Tanai H."/>
            <person name="Kimata M."/>
            <person name="Watanabe M."/>
            <person name="Hiraoka S."/>
            <person name="Chiba Y."/>
            <person name="Ishida S."/>
            <person name="Ono Y."/>
            <person name="Takiguchi S."/>
            <person name="Watanabe S."/>
            <person name="Yosida M."/>
            <person name="Hotuta T."/>
            <person name="Kusano J."/>
            <person name="Kanehori K."/>
            <person name="Takahashi-Fujii A."/>
            <person name="Hara H."/>
            <person name="Tanase T.-O."/>
            <person name="Nomura Y."/>
            <person name="Togiya S."/>
            <person name="Komai F."/>
            <person name="Hara R."/>
            <person name="Takeuchi K."/>
            <person name="Arita M."/>
            <person name="Imose N."/>
            <person name="Musashino K."/>
            <person name="Yuuki H."/>
            <person name="Oshima A."/>
            <person name="Sasaki N."/>
            <person name="Aotsuka S."/>
            <person name="Yoshikawa Y."/>
            <person name="Matsunawa H."/>
            <person name="Ichihara T."/>
            <person name="Shiohata N."/>
            <person name="Sano S."/>
            <person name="Moriya S."/>
            <person name="Momiyama H."/>
            <person name="Satoh N."/>
            <person name="Takami S."/>
            <person name="Terashima Y."/>
            <person name="Suzuki O."/>
            <person name="Nakagawa S."/>
            <person name="Senoh A."/>
            <person name="Mizoguchi H."/>
            <person name="Goto Y."/>
            <person name="Shimizu F."/>
            <person name="Wakebe H."/>
            <person name="Hishigaki H."/>
            <person name="Watanabe T."/>
            <person name="Sugiyama A."/>
            <person name="Takemoto M."/>
            <person name="Kawakami B."/>
            <person name="Yamazaki M."/>
            <person name="Watanabe K."/>
            <person name="Kumagai A."/>
            <person name="Itakura S."/>
            <person name="Fukuzumi Y."/>
            <person name="Fujimori Y."/>
            <person name="Komiyama M."/>
            <person name="Tashiro H."/>
            <person name="Tanigami A."/>
            <person name="Fujiwara T."/>
            <person name="Ono T."/>
            <person name="Yamada K."/>
            <person name="Fujii Y."/>
            <person name="Ozaki K."/>
            <person name="Hirao M."/>
            <person name="Ohmori Y."/>
            <person name="Kawabata A."/>
            <person name="Hikiji T."/>
            <person name="Kobatake N."/>
            <person name="Inagaki H."/>
            <person name="Ikema Y."/>
            <person name="Okamoto S."/>
            <person name="Okitani R."/>
            <person name="Kawakami T."/>
            <person name="Noguchi S."/>
            <person name="Itoh T."/>
            <person name="Shigeta K."/>
            <person name="Senba T."/>
            <person name="Matsumura K."/>
            <person name="Nakajima Y."/>
            <person name="Mizuno T."/>
            <person name="Morinaga M."/>
            <person name="Sasaki M."/>
            <person name="Togashi T."/>
            <person name="Oyama M."/>
            <person name="Hata H."/>
            <person name="Watanabe M."/>
            <person name="Komatsu T."/>
            <person name="Mizushima-Sugano J."/>
            <person name="Satoh T."/>
            <person name="Shirai Y."/>
            <person name="Takahashi Y."/>
            <person name="Nakagawa K."/>
            <person name="Okumura K."/>
            <person name="Nagase T."/>
            <person name="Nomura N."/>
            <person name="Kikuchi H."/>
            <person name="Masuho Y."/>
            <person name="Yamashita R."/>
            <person name="Nakai K."/>
            <person name="Yada T."/>
            <person name="Nakamura Y."/>
            <person name="Ohara O."/>
            <person name="Isogai T."/>
            <person name="Sugano S."/>
        </authorList>
    </citation>
    <scope>NUCLEOTIDE SEQUENCE [LARGE SCALE MRNA] (ISOFORMS 1 AND 3)</scope>
    <scope>VARIANTS SER-703; SER-797 AND ILE-845</scope>
    <source>
        <tissue>Chondrocyte</tissue>
        <tissue>Trachea</tissue>
        <tissue>Vascular endothelial cell</tissue>
    </source>
</reference>
<reference key="5">
    <citation type="journal article" date="2007" name="BMC Genomics">
        <title>The full-ORF clone resource of the German cDNA consortium.</title>
        <authorList>
            <person name="Bechtel S."/>
            <person name="Rosenfelder H."/>
            <person name="Duda A."/>
            <person name="Schmidt C.P."/>
            <person name="Ernst U."/>
            <person name="Wellenreuther R."/>
            <person name="Mehrle A."/>
            <person name="Schuster C."/>
            <person name="Bahr A."/>
            <person name="Bloecker H."/>
            <person name="Heubner D."/>
            <person name="Hoerlein A."/>
            <person name="Michel G."/>
            <person name="Wedler H."/>
            <person name="Koehrer K."/>
            <person name="Ottenwaelder B."/>
            <person name="Poustka A."/>
            <person name="Wiemann S."/>
            <person name="Schupp I."/>
        </authorList>
    </citation>
    <scope>NUCLEOTIDE SEQUENCE [LARGE SCALE MRNA] (ISOFORMS 1 AND 2)</scope>
    <scope>VARIANTS SER-703; SER-797; ILE-845 AND MET-1241</scope>
    <source>
        <tissue>Colon endothelium</tissue>
    </source>
</reference>
<reference key="6">
    <citation type="journal article" date="2003" name="Nature">
        <title>The DNA sequence and analysis of human chromosome 6.</title>
        <authorList>
            <person name="Mungall A.J."/>
            <person name="Palmer S.A."/>
            <person name="Sims S.K."/>
            <person name="Edwards C.A."/>
            <person name="Ashurst J.L."/>
            <person name="Wilming L."/>
            <person name="Jones M.C."/>
            <person name="Horton R."/>
            <person name="Hunt S.E."/>
            <person name="Scott C.E."/>
            <person name="Gilbert J.G.R."/>
            <person name="Clamp M.E."/>
            <person name="Bethel G."/>
            <person name="Milne S."/>
            <person name="Ainscough R."/>
            <person name="Almeida J.P."/>
            <person name="Ambrose K.D."/>
            <person name="Andrews T.D."/>
            <person name="Ashwell R.I.S."/>
            <person name="Babbage A.K."/>
            <person name="Bagguley C.L."/>
            <person name="Bailey J."/>
            <person name="Banerjee R."/>
            <person name="Barker D.J."/>
            <person name="Barlow K.F."/>
            <person name="Bates K."/>
            <person name="Beare D.M."/>
            <person name="Beasley H."/>
            <person name="Beasley O."/>
            <person name="Bird C.P."/>
            <person name="Blakey S.E."/>
            <person name="Bray-Allen S."/>
            <person name="Brook J."/>
            <person name="Brown A.J."/>
            <person name="Brown J.Y."/>
            <person name="Burford D.C."/>
            <person name="Burrill W."/>
            <person name="Burton J."/>
            <person name="Carder C."/>
            <person name="Carter N.P."/>
            <person name="Chapman J.C."/>
            <person name="Clark S.Y."/>
            <person name="Clark G."/>
            <person name="Clee C.M."/>
            <person name="Clegg S."/>
            <person name="Cobley V."/>
            <person name="Collier R.E."/>
            <person name="Collins J.E."/>
            <person name="Colman L.K."/>
            <person name="Corby N.R."/>
            <person name="Coville G.J."/>
            <person name="Culley K.M."/>
            <person name="Dhami P."/>
            <person name="Davies J."/>
            <person name="Dunn M."/>
            <person name="Earthrowl M.E."/>
            <person name="Ellington A.E."/>
            <person name="Evans K.A."/>
            <person name="Faulkner L."/>
            <person name="Francis M.D."/>
            <person name="Frankish A."/>
            <person name="Frankland J."/>
            <person name="French L."/>
            <person name="Garner P."/>
            <person name="Garnett J."/>
            <person name="Ghori M.J."/>
            <person name="Gilby L.M."/>
            <person name="Gillson C.J."/>
            <person name="Glithero R.J."/>
            <person name="Grafham D.V."/>
            <person name="Grant M."/>
            <person name="Gribble S."/>
            <person name="Griffiths C."/>
            <person name="Griffiths M.N.D."/>
            <person name="Hall R."/>
            <person name="Halls K.S."/>
            <person name="Hammond S."/>
            <person name="Harley J.L."/>
            <person name="Hart E.A."/>
            <person name="Heath P.D."/>
            <person name="Heathcott R."/>
            <person name="Holmes S.J."/>
            <person name="Howden P.J."/>
            <person name="Howe K.L."/>
            <person name="Howell G.R."/>
            <person name="Huckle E."/>
            <person name="Humphray S.J."/>
            <person name="Humphries M.D."/>
            <person name="Hunt A.R."/>
            <person name="Johnson C.M."/>
            <person name="Joy A.A."/>
            <person name="Kay M."/>
            <person name="Keenan S.J."/>
            <person name="Kimberley A.M."/>
            <person name="King A."/>
            <person name="Laird G.K."/>
            <person name="Langford C."/>
            <person name="Lawlor S."/>
            <person name="Leongamornlert D.A."/>
            <person name="Leversha M."/>
            <person name="Lloyd C.R."/>
            <person name="Lloyd D.M."/>
            <person name="Loveland J.E."/>
            <person name="Lovell J."/>
            <person name="Martin S."/>
            <person name="Mashreghi-Mohammadi M."/>
            <person name="Maslen G.L."/>
            <person name="Matthews L."/>
            <person name="McCann O.T."/>
            <person name="McLaren S.J."/>
            <person name="McLay K."/>
            <person name="McMurray A."/>
            <person name="Moore M.J.F."/>
            <person name="Mullikin J.C."/>
            <person name="Niblett D."/>
            <person name="Nickerson T."/>
            <person name="Novik K.L."/>
            <person name="Oliver K."/>
            <person name="Overton-Larty E.K."/>
            <person name="Parker A."/>
            <person name="Patel R."/>
            <person name="Pearce A.V."/>
            <person name="Peck A.I."/>
            <person name="Phillimore B.J.C.T."/>
            <person name="Phillips S."/>
            <person name="Plumb R.W."/>
            <person name="Porter K.M."/>
            <person name="Ramsey Y."/>
            <person name="Ranby S.A."/>
            <person name="Rice C.M."/>
            <person name="Ross M.T."/>
            <person name="Searle S.M."/>
            <person name="Sehra H.K."/>
            <person name="Sheridan E."/>
            <person name="Skuce C.D."/>
            <person name="Smith S."/>
            <person name="Smith M."/>
            <person name="Spraggon L."/>
            <person name="Squares S.L."/>
            <person name="Steward C.A."/>
            <person name="Sycamore N."/>
            <person name="Tamlyn-Hall G."/>
            <person name="Tester J."/>
            <person name="Theaker A.J."/>
            <person name="Thomas D.W."/>
            <person name="Thorpe A."/>
            <person name="Tracey A."/>
            <person name="Tromans A."/>
            <person name="Tubby B."/>
            <person name="Wall M."/>
            <person name="Wallis J.M."/>
            <person name="West A.P."/>
            <person name="White S.S."/>
            <person name="Whitehead S.L."/>
            <person name="Whittaker H."/>
            <person name="Wild A."/>
            <person name="Willey D.J."/>
            <person name="Wilmer T.E."/>
            <person name="Wood J.M."/>
            <person name="Wray P.W."/>
            <person name="Wyatt J.C."/>
            <person name="Young L."/>
            <person name="Younger R.M."/>
            <person name="Bentley D.R."/>
            <person name="Coulson A."/>
            <person name="Durbin R.M."/>
            <person name="Hubbard T."/>
            <person name="Sulston J.E."/>
            <person name="Dunham I."/>
            <person name="Rogers J."/>
            <person name="Beck S."/>
        </authorList>
    </citation>
    <scope>NUCLEOTIDE SEQUENCE [LARGE SCALE GENOMIC DNA]</scope>
</reference>
<reference key="7">
    <citation type="submission" date="2004-08" db="EMBL/GenBank/DDBJ databases">
        <title>CD109 defines an ancient branch of the alpha2M/C3, C4, C5 family.</title>
        <authorList>
            <person name="Prosper J.Y.A."/>
            <person name="Wu X.-F."/>
            <person name="Sutherland D.R."/>
            <person name="Irwin D.M."/>
            <person name="Schuh A.C."/>
        </authorList>
    </citation>
    <scope>NUCLEOTIDE SEQUENCE [GENOMIC DNA] OF 370-444 AND 922-959</scope>
</reference>
<reference key="8">
    <citation type="journal article" date="2002" name="Blood">
        <title>A tyrosine703serine polymorphism of CD109 defines the Gov platelet alloantigens.</title>
        <authorList>
            <person name="Schuh A.C."/>
            <person name="Watkins N.A."/>
            <person name="Nguyen Q."/>
            <person name="Harmer N.J."/>
            <person name="Lin M."/>
            <person name="Prosper J.Y.A."/>
            <person name="Campbell K."/>
            <person name="Sutherland D.R."/>
            <person name="Metcalfe P."/>
            <person name="Horsfall W."/>
            <person name="Ouwehand W.H."/>
        </authorList>
    </citation>
    <scope>NUCLEOTIDE SEQUENCE [GENOMIC DNA] OF 703-741</scope>
    <scope>POLYMORPHISM</scope>
    <scope>VARIANT GOV(B) SER-703</scope>
</reference>
<reference key="9">
    <citation type="journal article" date="1991" name="Blood">
        <title>Identification of a cell-surface antigen associated with activated T lymphoblasts and activated platelets.</title>
        <authorList>
            <person name="Sutherland D.R."/>
            <person name="Yeo E."/>
            <person name="Ryan A."/>
            <person name="Mills G.B."/>
            <person name="Bailey D."/>
            <person name="Baker M.A."/>
        </authorList>
    </citation>
    <scope>PROTEOLYTIC CLEAVAGE</scope>
    <scope>GLYCOSYLATION</scope>
</reference>
<reference key="10">
    <citation type="journal article" date="2005" name="J. Proteome Res.">
        <title>Human plasma N-glycoproteome analysis by immunoaffinity subtraction, hydrazide chemistry, and mass spectrometry.</title>
        <authorList>
            <person name="Liu T."/>
            <person name="Qian W.-J."/>
            <person name="Gritsenko M.A."/>
            <person name="Camp D.G. II"/>
            <person name="Monroe M.E."/>
            <person name="Moore R.J."/>
            <person name="Smith R.D."/>
        </authorList>
    </citation>
    <scope>GLYCOSYLATION [LARGE SCALE ANALYSIS] AT ASN-68; ASN-118; ASN-247 AND ASN-419</scope>
    <source>
        <tissue>Plasma</tissue>
    </source>
</reference>
<reference key="11">
    <citation type="journal article" date="2006" name="Mol. Cell. Proteomics">
        <title>Elucidation of N-glycosylation sites on human platelet proteins: a glycoproteomic approach.</title>
        <authorList>
            <person name="Lewandrowski U."/>
            <person name="Moebius J."/>
            <person name="Walter U."/>
            <person name="Sickmann A."/>
        </authorList>
    </citation>
    <scope>GLYCOSYLATION [LARGE SCALE ANALYSIS] AT ASN-247</scope>
    <source>
        <tissue>Platelet</tissue>
    </source>
</reference>
<reference key="12">
    <citation type="journal article" date="2009" name="J. Proteome Res.">
        <title>Glycoproteomics analysis of human liver tissue by combination of multiple enzyme digestion and hydrazide chemistry.</title>
        <authorList>
            <person name="Chen R."/>
            <person name="Jiang X."/>
            <person name="Sun D."/>
            <person name="Han G."/>
            <person name="Wang F."/>
            <person name="Ye M."/>
            <person name="Wang L."/>
            <person name="Zou H."/>
        </authorList>
    </citation>
    <scope>GLYCOSYLATION [LARGE SCALE ANALYSIS] AT ASN-419</scope>
    <source>
        <tissue>Liver</tissue>
    </source>
</reference>
<reference key="13">
    <citation type="journal article" date="2009" name="Nat. Biotechnol.">
        <title>Mass-spectrometric identification and relative quantification of N-linked cell surface glycoproteins.</title>
        <authorList>
            <person name="Wollscheid B."/>
            <person name="Bausch-Fluck D."/>
            <person name="Henderson C."/>
            <person name="O'Brien R."/>
            <person name="Bibel M."/>
            <person name="Schiess R."/>
            <person name="Aebersold R."/>
            <person name="Watts J.D."/>
        </authorList>
    </citation>
    <scope>GLYCOSYLATION [LARGE SCALE ANALYSIS] AT ASN-68 AND ASN-118</scope>
    <source>
        <tissue>Leukemic T-cell</tissue>
    </source>
</reference>
<reference key="14">
    <citation type="journal article" date="2011" name="BMC Syst. Biol.">
        <title>Initial characterization of the human central proteome.</title>
        <authorList>
            <person name="Burkard T.R."/>
            <person name="Planyavsky M."/>
            <person name="Kaupe I."/>
            <person name="Breitwieser F.P."/>
            <person name="Buerckstuemmer T."/>
            <person name="Bennett K.L."/>
            <person name="Superti-Furga G."/>
            <person name="Colinge J."/>
        </authorList>
    </citation>
    <scope>IDENTIFICATION BY MASS SPECTROMETRY [LARGE SCALE ANALYSIS]</scope>
</reference>
<reference key="15">
    <citation type="journal article" date="2006" name="Science">
        <title>The consensus coding sequences of human breast and colorectal cancers.</title>
        <authorList>
            <person name="Sjoeblom T."/>
            <person name="Jones S."/>
            <person name="Wood L.D."/>
            <person name="Parsons D.W."/>
            <person name="Lin J."/>
            <person name="Barber T.D."/>
            <person name="Mandelker D."/>
            <person name="Leary R.J."/>
            <person name="Ptak J."/>
            <person name="Silliman N."/>
            <person name="Szabo S."/>
            <person name="Buckhaults P."/>
            <person name="Farrell C."/>
            <person name="Meeh P."/>
            <person name="Markowitz S.D."/>
            <person name="Willis J."/>
            <person name="Dawson D."/>
            <person name="Willson J.K.V."/>
            <person name="Gazdar A.F."/>
            <person name="Hartigan J."/>
            <person name="Wu L."/>
            <person name="Liu C."/>
            <person name="Parmigiani G."/>
            <person name="Park B.H."/>
            <person name="Bachman K.E."/>
            <person name="Papadopoulos N."/>
            <person name="Vogelstein B."/>
            <person name="Kinzler K.W."/>
            <person name="Velculescu V.E."/>
        </authorList>
    </citation>
    <scope>VARIANTS [LARGE SCALE ANALYSIS] GLU-1007 AND LYS-1065</scope>
</reference>
<reference key="16">
    <citation type="journal article" date="2015" name="Proc. Natl. Acad. Sci. U.S.A.">
        <title>Neomorphic effects of recurrent somatic mutations in Yin Yang 1 in insulin-producing adenomas.</title>
        <authorList>
            <person name="Cromer M.K."/>
            <person name="Choi M."/>
            <person name="Nelson-Williams C."/>
            <person name="Fonseca A.L."/>
            <person name="Kunstman J.W."/>
            <person name="Korah R.M."/>
            <person name="Overton J.D."/>
            <person name="Mane S."/>
            <person name="Kenney B."/>
            <person name="Malchoff C.D."/>
            <person name="Stalberg P."/>
            <person name="Akerstroem G."/>
            <person name="Westin G."/>
            <person name="Hellman P."/>
            <person name="Carling T."/>
            <person name="Bjoerklund P."/>
            <person name="Lifton R.P."/>
        </authorList>
    </citation>
    <scope>VARIANT GLY-791</scope>
</reference>
<sequence>MQGPPLLTAAHLLCVCTAALAVAPGPRFLVTAPGIIRPGGNVTIGVELLEHCPSQVTVKAELLKTASNLTVSVLEAEGVFEKGSFKTLTLPSLPLNSADEIYELRVTGRTQDEILFSNSTRLSFETKRISVFIQTDKALYKPKQEVKFRIVTLFSDFKPYKTSLNILIKDPKSNLIQQWLSQQSDLGVISKTFQLSSHPILGDWSIQVQVNDQTYYQSFQVSEYVLPKFEVTLQTPLYCSMNSKHLNGTITAKYTYGKPVKGDVTLTFLPLSFWGKKKNITKTFKINGSANFSFNDEEMKNVMDSSNGLSEYLDLSSPGPVEILTTVTESVTGISRNVSTNVFFKQHDYIIEFFDYTTVLKPSLNFTATVKVTRADGNQLTLEERRNNVVITVTQRNYTEYWSGSNSGNQKMEAVQKINYTVPQSGTFKIEFPILEDSSELQLKAYFLGSKSSMAVHSLFKSPSKTYIQLKTRDENIKVGSPFELVVSGNKRLKELSYMVVSRGQLVAVGKQNSTMFSLTPENSWTPKACVIVYYIEDDGEIISDVLKIPVQLVFKNKIKLYWSKVKAEPSEKVSLRISVTQPDSIVGIVAVDKSVNLMNASNDITMENVVHELELYNTGYYLGMFMNSFAVFQECGLWVLTDANLTKDYIDGVYDNAEYAERFMEENEGHIVDIHDFSLGSSPHVRKHFPETWIWLDTNMGYRIYQEFEVTVPDSITSWVATGFVISEDLGLGLTTTPVELQAFQPFFIFLNLPYSVIRGEEFALEITIFNYLKDATEVKVIIEKSDKFDILMTSNEINATGHQQTLLVPSEDGATVLFPIRPTHLGEIPITVTALSPTASDAVTQMILVKAEGIEKSYSQSILLDLTDNRLQSTLKTLSFSFPPNTVTGSERVQITAIGDVLGPSINGLASLIRMPYGCGEQNMINFAPNIYILDYLTKKKQLTDNLKEKALSFMRQGYQRELLYQREDGSFSAFGNYDPSGSTWLSAFVLRCFLEADPYIDIDQNVLHRTYTWLKGHQKSNGEFWDPGRVIHSELQGGNKSPVTLTAYIVTSLLGYRKYQPNIDVQESIHFLESEFSRGISDNYTLALITYALSSVGSPKAKEALNMLTWRAEQEGGMQFWVSSESKLSDSWQPRSLDIEVAAYALLSHFLQFQTSEGIPIMRWLSRQRNSLGGFASTQDTTVALKALSEFAALMNTERTNIQVTVTGPSSPSPVKFLIDTHNRLLLQTAELAVVQPTAVNISANGFGFAICQLNVVYNVKASGSSRRRRSIQNQEAFDLDVAVKENKDDLNHVDLNVCTSFSGPGRSGMALMEVNLLSGFMVPSEAISLSETVKKVEYDHGKLNLYLDSVNETQFCVNIPAVRNFKVSNTQDASVSIVDYYEPRRQAVRSYNSEVKLSSCDLCSDVQGCRPCEDGASGSHHHSSVIFIFCFKLLYFMELWL</sequence>
<keyword id="KW-0002">3D-structure</keyword>
<keyword id="KW-0025">Alternative splicing</keyword>
<keyword id="KW-0082">Bait region</keyword>
<keyword id="KW-1003">Cell membrane</keyword>
<keyword id="KW-0903">Direct protein sequencing</keyword>
<keyword id="KW-1015">Disulfide bond</keyword>
<keyword id="KW-0325">Glycoprotein</keyword>
<keyword id="KW-0336">GPI-anchor</keyword>
<keyword id="KW-0449">Lipoprotein</keyword>
<keyword id="KW-0472">Membrane</keyword>
<keyword id="KW-0646">Protease inhibitor</keyword>
<keyword id="KW-1267">Proteomics identification</keyword>
<keyword id="KW-1185">Reference proteome</keyword>
<keyword id="KW-0722">Serine protease inhibitor</keyword>
<keyword id="KW-0732">Signal</keyword>
<keyword id="KW-0882">Thioester bond</keyword>